<organism>
    <name type="scientific">Rhizobium meliloti (strain 1021)</name>
    <name type="common">Ensifer meliloti</name>
    <name type="synonym">Sinorhizobium meliloti</name>
    <dbReference type="NCBI Taxonomy" id="266834"/>
    <lineage>
        <taxon>Bacteria</taxon>
        <taxon>Pseudomonadati</taxon>
        <taxon>Pseudomonadota</taxon>
        <taxon>Alphaproteobacteria</taxon>
        <taxon>Hyphomicrobiales</taxon>
        <taxon>Rhizobiaceae</taxon>
        <taxon>Sinorhizobium/Ensifer group</taxon>
        <taxon>Sinorhizobium</taxon>
    </lineage>
</organism>
<comment type="function">
    <text evidence="1">Involved in phosphonate degradation.</text>
</comment>
<comment type="catalytic activity">
    <reaction evidence="1">
        <text>(2-aminoethyl)phosphonate + pyruvate = phosphonoacetaldehyde + L-alanine</text>
        <dbReference type="Rhea" id="RHEA:17021"/>
        <dbReference type="ChEBI" id="CHEBI:15361"/>
        <dbReference type="ChEBI" id="CHEBI:57418"/>
        <dbReference type="ChEBI" id="CHEBI:57972"/>
        <dbReference type="ChEBI" id="CHEBI:58383"/>
        <dbReference type="EC" id="2.6.1.37"/>
    </reaction>
</comment>
<comment type="cofactor">
    <cofactor evidence="1">
        <name>pyridoxal 5'-phosphate</name>
        <dbReference type="ChEBI" id="CHEBI:597326"/>
    </cofactor>
</comment>
<comment type="subunit">
    <text evidence="1">Homodimer.</text>
</comment>
<comment type="similarity">
    <text evidence="1">Belongs to the class-V pyridoxal-phosphate-dependent aminotransferase family. PhnW subfamily.</text>
</comment>
<comment type="caution">
    <text evidence="2">The second enzyme involved in phosphonate degradation (PhnX, EC 3.11.1.1) is not found in this organism. The function of this enzyme is therefore uncertain.</text>
</comment>
<geneLocation type="plasmid">
    <name>pSymB</name>
    <name>megaplasmid 2</name>
</geneLocation>
<gene>
    <name evidence="1" type="primary">phnW</name>
    <name type="ordered locus">RB0977</name>
    <name type="ORF">SMb21537</name>
</gene>
<evidence type="ECO:0000255" key="1">
    <source>
        <dbReference type="HAMAP-Rule" id="MF_01376"/>
    </source>
</evidence>
<evidence type="ECO:0000305" key="2"/>
<feature type="chain" id="PRO_0000286783" description="2-aminoethylphosphonate--pyruvate transaminase">
    <location>
        <begin position="1"/>
        <end position="383"/>
    </location>
</feature>
<feature type="modified residue" description="N6-(pyridoxal phosphate)lysine" evidence="1">
    <location>
        <position position="192"/>
    </location>
</feature>
<keyword id="KW-0032">Aminotransferase</keyword>
<keyword id="KW-0614">Plasmid</keyword>
<keyword id="KW-0663">Pyridoxal phosphate</keyword>
<keyword id="KW-0670">Pyruvate</keyword>
<keyword id="KW-1185">Reference proteome</keyword>
<keyword id="KW-0808">Transferase</keyword>
<accession>Q92UV9</accession>
<proteinExistence type="inferred from homology"/>
<reference key="1">
    <citation type="journal article" date="2001" name="Proc. Natl. Acad. Sci. U.S.A.">
        <title>The complete sequence of the 1,683-kb pSymB megaplasmid from the N2-fixing endosymbiont Sinorhizobium meliloti.</title>
        <authorList>
            <person name="Finan T.M."/>
            <person name="Weidner S."/>
            <person name="Wong K."/>
            <person name="Buhrmester J."/>
            <person name="Chain P."/>
            <person name="Vorhoelter F.J."/>
            <person name="Hernandez-Lucas I."/>
            <person name="Becker A."/>
            <person name="Cowie A."/>
            <person name="Gouzy J."/>
            <person name="Golding B."/>
            <person name="Puehler A."/>
        </authorList>
    </citation>
    <scope>NUCLEOTIDE SEQUENCE [LARGE SCALE GENOMIC DNA]</scope>
    <source>
        <strain>1021</strain>
    </source>
</reference>
<reference key="2">
    <citation type="journal article" date="2001" name="Science">
        <title>The composite genome of the legume symbiont Sinorhizobium meliloti.</title>
        <authorList>
            <person name="Galibert F."/>
            <person name="Finan T.M."/>
            <person name="Long S.R."/>
            <person name="Puehler A."/>
            <person name="Abola P."/>
            <person name="Ampe F."/>
            <person name="Barloy-Hubler F."/>
            <person name="Barnett M.J."/>
            <person name="Becker A."/>
            <person name="Boistard P."/>
            <person name="Bothe G."/>
            <person name="Boutry M."/>
            <person name="Bowser L."/>
            <person name="Buhrmester J."/>
            <person name="Cadieu E."/>
            <person name="Capela D."/>
            <person name="Chain P."/>
            <person name="Cowie A."/>
            <person name="Davis R.W."/>
            <person name="Dreano S."/>
            <person name="Federspiel N.A."/>
            <person name="Fisher R.F."/>
            <person name="Gloux S."/>
            <person name="Godrie T."/>
            <person name="Goffeau A."/>
            <person name="Golding B."/>
            <person name="Gouzy J."/>
            <person name="Gurjal M."/>
            <person name="Hernandez-Lucas I."/>
            <person name="Hong A."/>
            <person name="Huizar L."/>
            <person name="Hyman R.W."/>
            <person name="Jones T."/>
            <person name="Kahn D."/>
            <person name="Kahn M.L."/>
            <person name="Kalman S."/>
            <person name="Keating D.H."/>
            <person name="Kiss E."/>
            <person name="Komp C."/>
            <person name="Lelaure V."/>
            <person name="Masuy D."/>
            <person name="Palm C."/>
            <person name="Peck M.C."/>
            <person name="Pohl T.M."/>
            <person name="Portetelle D."/>
            <person name="Purnelle B."/>
            <person name="Ramsperger U."/>
            <person name="Surzycki R."/>
            <person name="Thebault P."/>
            <person name="Vandenbol M."/>
            <person name="Vorhoelter F.J."/>
            <person name="Weidner S."/>
            <person name="Wells D.H."/>
            <person name="Wong K."/>
            <person name="Yeh K.-C."/>
            <person name="Batut J."/>
        </authorList>
    </citation>
    <scope>NUCLEOTIDE SEQUENCE [LARGE SCALE GENOMIC DNA]</scope>
    <source>
        <strain>1021</strain>
    </source>
</reference>
<dbReference type="EC" id="2.6.1.37" evidence="1"/>
<dbReference type="EMBL" id="AL591985">
    <property type="protein sequence ID" value="CAC49377.1"/>
    <property type="molecule type" value="Genomic_DNA"/>
</dbReference>
<dbReference type="PIR" id="A95964">
    <property type="entry name" value="A95964"/>
</dbReference>
<dbReference type="RefSeq" id="NP_437517.1">
    <property type="nucleotide sequence ID" value="NC_003078.1"/>
</dbReference>
<dbReference type="SMR" id="Q92UV9"/>
<dbReference type="EnsemblBacteria" id="CAC49377">
    <property type="protein sequence ID" value="CAC49377"/>
    <property type="gene ID" value="SM_b21537"/>
</dbReference>
<dbReference type="KEGG" id="sme:SM_b21537"/>
<dbReference type="PATRIC" id="fig|266834.11.peg.5904"/>
<dbReference type="eggNOG" id="COG0075">
    <property type="taxonomic scope" value="Bacteria"/>
</dbReference>
<dbReference type="HOGENOM" id="CLU_027686_3_1_5"/>
<dbReference type="OrthoDB" id="9766472at2"/>
<dbReference type="Proteomes" id="UP000001976">
    <property type="component" value="Plasmid pSymB"/>
</dbReference>
<dbReference type="GO" id="GO:0047304">
    <property type="term" value="F:2-aminoethylphosphonate-pyruvate transaminase activity"/>
    <property type="evidence" value="ECO:0007669"/>
    <property type="project" value="UniProtKB-UniRule"/>
</dbReference>
<dbReference type="GO" id="GO:0019700">
    <property type="term" value="P:organic phosphonate catabolic process"/>
    <property type="evidence" value="ECO:0007669"/>
    <property type="project" value="InterPro"/>
</dbReference>
<dbReference type="Gene3D" id="3.90.1150.10">
    <property type="entry name" value="Aspartate Aminotransferase, domain 1"/>
    <property type="match status" value="1"/>
</dbReference>
<dbReference type="Gene3D" id="3.40.640.10">
    <property type="entry name" value="Type I PLP-dependent aspartate aminotransferase-like (Major domain)"/>
    <property type="match status" value="1"/>
</dbReference>
<dbReference type="HAMAP" id="MF_01376">
    <property type="entry name" value="PhnW_aminotrans_5"/>
    <property type="match status" value="1"/>
</dbReference>
<dbReference type="InterPro" id="IPR000192">
    <property type="entry name" value="Aminotrans_V_dom"/>
</dbReference>
<dbReference type="InterPro" id="IPR012703">
    <property type="entry name" value="NH2EtPonate_pyrv_transaminase"/>
</dbReference>
<dbReference type="InterPro" id="IPR015424">
    <property type="entry name" value="PyrdxlP-dep_Trfase"/>
</dbReference>
<dbReference type="InterPro" id="IPR015421">
    <property type="entry name" value="PyrdxlP-dep_Trfase_major"/>
</dbReference>
<dbReference type="InterPro" id="IPR015422">
    <property type="entry name" value="PyrdxlP-dep_Trfase_small"/>
</dbReference>
<dbReference type="InterPro" id="IPR024169">
    <property type="entry name" value="SP_NH2Trfase/AEP_transaminase"/>
</dbReference>
<dbReference type="NCBIfam" id="TIGR03301">
    <property type="entry name" value="PhnW-AepZ"/>
    <property type="match status" value="1"/>
</dbReference>
<dbReference type="NCBIfam" id="NF010006">
    <property type="entry name" value="PRK13479.1"/>
    <property type="match status" value="1"/>
</dbReference>
<dbReference type="NCBIfam" id="TIGR02326">
    <property type="entry name" value="transamin_PhnW"/>
    <property type="match status" value="1"/>
</dbReference>
<dbReference type="PANTHER" id="PTHR42778">
    <property type="entry name" value="2-AMINOETHYLPHOSPHONATE--PYRUVATE TRANSAMINASE"/>
    <property type="match status" value="1"/>
</dbReference>
<dbReference type="PANTHER" id="PTHR42778:SF1">
    <property type="entry name" value="2-AMINOETHYLPHOSPHONATE--PYRUVATE TRANSAMINASE"/>
    <property type="match status" value="1"/>
</dbReference>
<dbReference type="Pfam" id="PF00266">
    <property type="entry name" value="Aminotran_5"/>
    <property type="match status" value="1"/>
</dbReference>
<dbReference type="PIRSF" id="PIRSF000524">
    <property type="entry name" value="SPT"/>
    <property type="match status" value="1"/>
</dbReference>
<dbReference type="SUPFAM" id="SSF53383">
    <property type="entry name" value="PLP-dependent transferases"/>
    <property type="match status" value="1"/>
</dbReference>
<protein>
    <recommendedName>
        <fullName evidence="1">2-aminoethylphosphonate--pyruvate transaminase</fullName>
        <ecNumber evidence="1">2.6.1.37</ecNumber>
    </recommendedName>
    <alternativeName>
        <fullName evidence="1">2-aminoethylphosphonate aminotransferase</fullName>
    </alternativeName>
    <alternativeName>
        <fullName evidence="1">AEP transaminase</fullName>
        <shortName evidence="1">AEPT</shortName>
    </alternativeName>
</protein>
<name>PHNW_RHIME</name>
<sequence length="383" mass="41652">MGEPYLLTPGPLTTAFSVKDAMLRDWGSWDGDFRGMTAELRRELLAIAGDESGQYDCVPMQGSGSFSVEAMLGSFIPRDGKVLVLMNGAYGQRIAQTLKYLGRAHVSIDKGDYMPPRGSEVAAALDADPAITHVVVVHCETSSGILNPLKEISEAVYSRGRKLLVDSMSAFGAVPAGVGDFRYEAIVSSANKCIEGVPGFGFVIARKSELEAAKDRSHSLSLDVHAQWAYMNKTGQWRFTPPTHVVAAFLEALRLHRKEGGVAGRGARYANNRDVMVAGMRQLGFETLLGDEWLSPIIVTFFSPAHPNFKFERFYELMKARGFIIYPGKLTVVDSFRIGCIGQMDSHVMQKVVAAAAESLAKMRVDTATPPALALAERARLAA</sequence>